<accession>P0DL21</accession>
<dbReference type="GO" id="GO:0005576">
    <property type="term" value="C:extracellular region"/>
    <property type="evidence" value="ECO:0007669"/>
    <property type="project" value="UniProtKB-SubCell"/>
</dbReference>
<dbReference type="GO" id="GO:0090729">
    <property type="term" value="F:toxin activity"/>
    <property type="evidence" value="ECO:0007669"/>
    <property type="project" value="UniProtKB-KW"/>
</dbReference>
<proteinExistence type="evidence at protein level"/>
<reference key="1">
    <citation type="journal article" date="2009" name="J. Biochem.">
        <title>Structural divergence of cysteine-rich secretory proteins in snake venoms.</title>
        <authorList>
            <person name="Matsunaga Y."/>
            <person name="Yamazaki Y."/>
            <person name="Hyodo F."/>
            <person name="Sugiyama Y."/>
            <person name="Nozaki M."/>
            <person name="Morita T."/>
        </authorList>
    </citation>
    <scope>PROTEIN SEQUENCE</scope>
    <source>
        <tissue>Venom</tissue>
    </source>
</reference>
<comment type="subcellular location">
    <subcellularLocation>
        <location>Secreted</location>
    </subcellularLocation>
</comment>
<comment type="tissue specificity">
    <text>Expressed by the venom gland.</text>
</comment>
<comment type="PTM">
    <text evidence="1">Contains 8 disulfide bonds.</text>
</comment>
<comment type="similarity">
    <text evidence="3">Belongs to the CRISP family.</text>
</comment>
<organism>
    <name type="scientific">Pseudechis colletti</name>
    <name type="common">Collett's snake</name>
    <dbReference type="NCBI Taxonomy" id="239754"/>
    <lineage>
        <taxon>Eukaryota</taxon>
        <taxon>Metazoa</taxon>
        <taxon>Chordata</taxon>
        <taxon>Craniata</taxon>
        <taxon>Vertebrata</taxon>
        <taxon>Euteleostomi</taxon>
        <taxon>Lepidosauria</taxon>
        <taxon>Squamata</taxon>
        <taxon>Bifurcata</taxon>
        <taxon>Unidentata</taxon>
        <taxon>Episquamata</taxon>
        <taxon>Toxicofera</taxon>
        <taxon>Serpentes</taxon>
        <taxon>Colubroidea</taxon>
        <taxon>Elapidae</taxon>
        <taxon>Hydrophiinae</taxon>
        <taxon>Pseudechis</taxon>
    </lineage>
</organism>
<keyword id="KW-0903">Direct protein sequencing</keyword>
<keyword id="KW-1015">Disulfide bond</keyword>
<keyword id="KW-0964">Secreted</keyword>
<keyword id="KW-0800">Toxin</keyword>
<protein>
    <recommendedName>
        <fullName>Cysteine-rich venom protein collettin-a</fullName>
        <shortName>CRVP-a</shortName>
    </recommendedName>
    <component>
        <recommendedName>
            <fullName>Cysteine-rich venom protein collettin-b</fullName>
            <shortName>CRVP-b</shortName>
        </recommendedName>
    </component>
</protein>
<name>CRVPA_PSECT</name>
<feature type="chain" id="PRO_0000422151" description="Cysteine-rich venom protein collettin-a">
    <location>
        <begin position="1"/>
        <end position="22" status="greater than"/>
    </location>
</feature>
<feature type="chain" id="PRO_0000422152" description="Cysteine-rich venom protein collettin-b">
    <location>
        <begin position="3"/>
        <end position="22" status="greater than"/>
    </location>
</feature>
<feature type="region of interest" description="Disordered" evidence="2">
    <location>
        <begin position="1"/>
        <end position="22"/>
    </location>
</feature>
<feature type="compositionally biased region" description="Basic and acidic residues" evidence="2">
    <location>
        <begin position="1"/>
        <end position="15"/>
    </location>
</feature>
<feature type="non-terminal residue">
    <location>
        <position position="22"/>
    </location>
</feature>
<evidence type="ECO:0000250" key="1"/>
<evidence type="ECO:0000256" key="2">
    <source>
        <dbReference type="SAM" id="MobiDB-lite"/>
    </source>
</evidence>
<evidence type="ECO:0000305" key="3"/>
<sequence>SNKKNYQKEIVDKHNALRRSVK</sequence>